<organism>
    <name type="scientific">Drosophila melanogaster</name>
    <name type="common">Fruit fly</name>
    <dbReference type="NCBI Taxonomy" id="7227"/>
    <lineage>
        <taxon>Eukaryota</taxon>
        <taxon>Metazoa</taxon>
        <taxon>Ecdysozoa</taxon>
        <taxon>Arthropoda</taxon>
        <taxon>Hexapoda</taxon>
        <taxon>Insecta</taxon>
        <taxon>Pterygota</taxon>
        <taxon>Neoptera</taxon>
        <taxon>Endopterygota</taxon>
        <taxon>Diptera</taxon>
        <taxon>Brachycera</taxon>
        <taxon>Muscomorpha</taxon>
        <taxon>Ephydroidea</taxon>
        <taxon>Drosophilidae</taxon>
        <taxon>Drosophila</taxon>
        <taxon>Sophophora</taxon>
    </lineage>
</organism>
<dbReference type="EMBL" id="AE014297">
    <property type="protein sequence ID" value="AAF56022.1"/>
    <property type="molecule type" value="Genomic_DNA"/>
</dbReference>
<dbReference type="EMBL" id="AY070607">
    <property type="protein sequence ID" value="AAL48078.1"/>
    <property type="molecule type" value="mRNA"/>
</dbReference>
<dbReference type="RefSeq" id="NP_524451.1">
    <property type="nucleotide sequence ID" value="NM_079727.3"/>
</dbReference>
<dbReference type="PDB" id="4E0Q">
    <property type="method" value="X-ray"/>
    <property type="resolution" value="2.50 A"/>
    <property type="chains" value="A/B=51-187"/>
</dbReference>
<dbReference type="PDBsum" id="4E0Q"/>
<dbReference type="SMR" id="Q9VCY3"/>
<dbReference type="BioGRID" id="67615">
    <property type="interactions" value="8"/>
</dbReference>
<dbReference type="ComplexPortal" id="CPX-7964">
    <property type="entry name" value="COP9 signalosome complex, testis-specific variant"/>
</dbReference>
<dbReference type="ComplexPortal" id="CPX-7974">
    <property type="entry name" value="COP9 signalosome complex"/>
</dbReference>
<dbReference type="FunCoup" id="Q9VCY3">
    <property type="interactions" value="2141"/>
</dbReference>
<dbReference type="IntAct" id="Q9VCY3">
    <property type="interactions" value="8"/>
</dbReference>
<dbReference type="MINT" id="Q9VCY3"/>
<dbReference type="STRING" id="7227.FBpp0083658"/>
<dbReference type="MEROPS" id="M67.972"/>
<dbReference type="PaxDb" id="7227-FBpp0083658"/>
<dbReference type="DNASU" id="42661"/>
<dbReference type="EnsemblMetazoa" id="FBtr0084265">
    <property type="protein sequence ID" value="FBpp0083658"/>
    <property type="gene ID" value="FBgn0028837"/>
</dbReference>
<dbReference type="GeneID" id="42661"/>
<dbReference type="KEGG" id="dme:Dmel_CG6932"/>
<dbReference type="AGR" id="FB:FBgn0028837"/>
<dbReference type="CTD" id="42661"/>
<dbReference type="FlyBase" id="FBgn0028837">
    <property type="gene designation" value="CSN6"/>
</dbReference>
<dbReference type="VEuPathDB" id="VectorBase:FBgn0028837"/>
<dbReference type="eggNOG" id="KOG3050">
    <property type="taxonomic scope" value="Eukaryota"/>
</dbReference>
<dbReference type="GeneTree" id="ENSGT00950000183073"/>
<dbReference type="HOGENOM" id="CLU_027018_1_2_1"/>
<dbReference type="InParanoid" id="Q9VCY3"/>
<dbReference type="OMA" id="LVGWWST"/>
<dbReference type="OrthoDB" id="1378at2759"/>
<dbReference type="PhylomeDB" id="Q9VCY3"/>
<dbReference type="Reactome" id="R-DME-5696394">
    <property type="pathway name" value="DNA Damage Recognition in GG-NER"/>
</dbReference>
<dbReference type="Reactome" id="R-DME-6781823">
    <property type="pathway name" value="Formation of TC-NER Pre-Incision Complex"/>
</dbReference>
<dbReference type="Reactome" id="R-DME-8856825">
    <property type="pathway name" value="Cargo recognition for clathrin-mediated endocytosis"/>
</dbReference>
<dbReference type="Reactome" id="R-DME-8951664">
    <property type="pathway name" value="Neddylation"/>
</dbReference>
<dbReference type="SignaLink" id="Q9VCY3"/>
<dbReference type="BioGRID-ORCS" id="42661">
    <property type="hits" value="0 hits in 1 CRISPR screen"/>
</dbReference>
<dbReference type="EvolutionaryTrace" id="Q9VCY3"/>
<dbReference type="GenomeRNAi" id="42661"/>
<dbReference type="PRO" id="PR:Q9VCY3"/>
<dbReference type="Proteomes" id="UP000000803">
    <property type="component" value="Chromosome 3R"/>
</dbReference>
<dbReference type="Bgee" id="FBgn0028837">
    <property type="expression patterns" value="Expressed in T neuron T4a (Drosophila) in embryonic/larval optic lobe (Drosophila) and 123 other cell types or tissues"/>
</dbReference>
<dbReference type="GO" id="GO:0008180">
    <property type="term" value="C:COP9 signalosome"/>
    <property type="evidence" value="ECO:0000250"/>
    <property type="project" value="FlyBase"/>
</dbReference>
<dbReference type="GO" id="GO:0005737">
    <property type="term" value="C:cytoplasm"/>
    <property type="evidence" value="ECO:0007669"/>
    <property type="project" value="UniProtKB-SubCell"/>
</dbReference>
<dbReference type="GO" id="GO:0042802">
    <property type="term" value="F:identical protein binding"/>
    <property type="evidence" value="ECO:0000353"/>
    <property type="project" value="IntAct"/>
</dbReference>
<dbReference type="GO" id="GO:0036099">
    <property type="term" value="P:female germ-line stem cell population maintenance"/>
    <property type="evidence" value="ECO:0000315"/>
    <property type="project" value="FlyBase"/>
</dbReference>
<dbReference type="GO" id="GO:0007281">
    <property type="term" value="P:germ cell development"/>
    <property type="evidence" value="ECO:0000315"/>
    <property type="project" value="FlyBase"/>
</dbReference>
<dbReference type="GO" id="GO:0048140">
    <property type="term" value="P:male germ-line cyst encapsulation"/>
    <property type="evidence" value="ECO:0000315"/>
    <property type="project" value="FlyBase"/>
</dbReference>
<dbReference type="GO" id="GO:0048477">
    <property type="term" value="P:oogenesis"/>
    <property type="evidence" value="ECO:0007669"/>
    <property type="project" value="UniProtKB-KW"/>
</dbReference>
<dbReference type="GO" id="GO:0000338">
    <property type="term" value="P:protein deneddylation"/>
    <property type="evidence" value="ECO:0000250"/>
    <property type="project" value="FlyBase"/>
</dbReference>
<dbReference type="GO" id="GO:0050821">
    <property type="term" value="P:protein stabilization"/>
    <property type="evidence" value="ECO:0000315"/>
    <property type="project" value="FlyBase"/>
</dbReference>
<dbReference type="CDD" id="cd08063">
    <property type="entry name" value="MPN_CSN6"/>
    <property type="match status" value="1"/>
</dbReference>
<dbReference type="FunFam" id="3.40.140.10:FF:000017">
    <property type="entry name" value="COP9 signalosome complex subunit 6"/>
    <property type="match status" value="1"/>
</dbReference>
<dbReference type="Gene3D" id="3.40.140.10">
    <property type="entry name" value="Cytidine Deaminase, domain 2"/>
    <property type="match status" value="1"/>
</dbReference>
<dbReference type="InterPro" id="IPR024969">
    <property type="entry name" value="EIF3F/CSN6-like_C"/>
</dbReference>
<dbReference type="InterPro" id="IPR000555">
    <property type="entry name" value="JAMM/MPN+_dom"/>
</dbReference>
<dbReference type="InterPro" id="IPR037518">
    <property type="entry name" value="MPN"/>
</dbReference>
<dbReference type="InterPro" id="IPR033859">
    <property type="entry name" value="MPN_CSN6"/>
</dbReference>
<dbReference type="PANTHER" id="PTHR10540:SF8">
    <property type="entry name" value="COP9 SIGNALOSOME COMPLEX SUBUNIT 6"/>
    <property type="match status" value="1"/>
</dbReference>
<dbReference type="PANTHER" id="PTHR10540">
    <property type="entry name" value="EUKARYOTIC TRANSLATION INITIATION FACTOR 3 SUBUNIT F-RELATED"/>
    <property type="match status" value="1"/>
</dbReference>
<dbReference type="Pfam" id="PF01398">
    <property type="entry name" value="JAB"/>
    <property type="match status" value="1"/>
</dbReference>
<dbReference type="Pfam" id="PF13012">
    <property type="entry name" value="MitMem_reg"/>
    <property type="match status" value="1"/>
</dbReference>
<dbReference type="SMART" id="SM00232">
    <property type="entry name" value="JAB_MPN"/>
    <property type="match status" value="1"/>
</dbReference>
<dbReference type="PROSITE" id="PS50249">
    <property type="entry name" value="MPN"/>
    <property type="match status" value="1"/>
</dbReference>
<proteinExistence type="evidence at protein level"/>
<protein>
    <recommendedName>
        <fullName>COP9 signalosome complex subunit 6</fullName>
        <shortName>Dch6</shortName>
        <shortName>Signalosome subunit 6</shortName>
    </recommendedName>
</protein>
<feature type="chain" id="PRO_0000194864" description="COP9 signalosome complex subunit 6">
    <location>
        <begin position="1"/>
        <end position="341"/>
    </location>
</feature>
<feature type="domain" description="MPN" evidence="1">
    <location>
        <begin position="54"/>
        <end position="188"/>
    </location>
</feature>
<feature type="region of interest" description="Disordered" evidence="2">
    <location>
        <begin position="1"/>
        <end position="43"/>
    </location>
</feature>
<feature type="compositionally biased region" description="Low complexity" evidence="2">
    <location>
        <begin position="11"/>
        <end position="27"/>
    </location>
</feature>
<feature type="strand" evidence="6">
    <location>
        <begin position="52"/>
        <end position="56"/>
    </location>
</feature>
<feature type="helix" evidence="6">
    <location>
        <begin position="58"/>
        <end position="69"/>
    </location>
</feature>
<feature type="strand" evidence="6">
    <location>
        <begin position="80"/>
        <end position="90"/>
    </location>
</feature>
<feature type="strand" evidence="6">
    <location>
        <begin position="93"/>
        <end position="101"/>
    </location>
</feature>
<feature type="strand" evidence="6">
    <location>
        <begin position="104"/>
        <end position="107"/>
    </location>
</feature>
<feature type="strand" evidence="6">
    <location>
        <begin position="110"/>
        <end position="113"/>
    </location>
</feature>
<feature type="helix" evidence="6">
    <location>
        <begin position="115"/>
        <end position="128"/>
    </location>
</feature>
<feature type="strand" evidence="6">
    <location>
        <begin position="133"/>
        <end position="141"/>
    </location>
</feature>
<feature type="helix" evidence="6">
    <location>
        <begin position="151"/>
        <end position="157"/>
    </location>
</feature>
<feature type="strand" evidence="6">
    <location>
        <begin position="163"/>
        <end position="168"/>
    </location>
</feature>
<feature type="helix" evidence="6">
    <location>
        <begin position="177"/>
        <end position="182"/>
    </location>
</feature>
<name>CSN6_DROME</name>
<keyword id="KW-0002">3D-structure</keyword>
<keyword id="KW-0963">Cytoplasm</keyword>
<keyword id="KW-0217">Developmental protein</keyword>
<keyword id="KW-0221">Differentiation</keyword>
<keyword id="KW-0539">Nucleus</keyword>
<keyword id="KW-0896">Oogenesis</keyword>
<keyword id="KW-1185">Reference proteome</keyword>
<keyword id="KW-0736">Signalosome</keyword>
<accession>Q9VCY3</accession>
<evidence type="ECO:0000255" key="1">
    <source>
        <dbReference type="PROSITE-ProRule" id="PRU01182"/>
    </source>
</evidence>
<evidence type="ECO:0000256" key="2">
    <source>
        <dbReference type="SAM" id="MobiDB-lite"/>
    </source>
</evidence>
<evidence type="ECO:0000269" key="3">
    <source>
    </source>
</evidence>
<evidence type="ECO:0000305" key="4"/>
<evidence type="ECO:0000305" key="5">
    <source>
    </source>
</evidence>
<evidence type="ECO:0007829" key="6">
    <source>
        <dbReference type="PDB" id="4E0Q"/>
    </source>
</evidence>
<gene>
    <name type="primary">CSN6</name>
    <name type="ORF">CG6932</name>
</gene>
<reference key="1">
    <citation type="journal article" date="2000" name="Science">
        <title>The genome sequence of Drosophila melanogaster.</title>
        <authorList>
            <person name="Adams M.D."/>
            <person name="Celniker S.E."/>
            <person name="Holt R.A."/>
            <person name="Evans C.A."/>
            <person name="Gocayne J.D."/>
            <person name="Amanatides P.G."/>
            <person name="Scherer S.E."/>
            <person name="Li P.W."/>
            <person name="Hoskins R.A."/>
            <person name="Galle R.F."/>
            <person name="George R.A."/>
            <person name="Lewis S.E."/>
            <person name="Richards S."/>
            <person name="Ashburner M."/>
            <person name="Henderson S.N."/>
            <person name="Sutton G.G."/>
            <person name="Wortman J.R."/>
            <person name="Yandell M.D."/>
            <person name="Zhang Q."/>
            <person name="Chen L.X."/>
            <person name="Brandon R.C."/>
            <person name="Rogers Y.-H.C."/>
            <person name="Blazej R.G."/>
            <person name="Champe M."/>
            <person name="Pfeiffer B.D."/>
            <person name="Wan K.H."/>
            <person name="Doyle C."/>
            <person name="Baxter E.G."/>
            <person name="Helt G."/>
            <person name="Nelson C.R."/>
            <person name="Miklos G.L.G."/>
            <person name="Abril J.F."/>
            <person name="Agbayani A."/>
            <person name="An H.-J."/>
            <person name="Andrews-Pfannkoch C."/>
            <person name="Baldwin D."/>
            <person name="Ballew R.M."/>
            <person name="Basu A."/>
            <person name="Baxendale J."/>
            <person name="Bayraktaroglu L."/>
            <person name="Beasley E.M."/>
            <person name="Beeson K.Y."/>
            <person name="Benos P.V."/>
            <person name="Berman B.P."/>
            <person name="Bhandari D."/>
            <person name="Bolshakov S."/>
            <person name="Borkova D."/>
            <person name="Botchan M.R."/>
            <person name="Bouck J."/>
            <person name="Brokstein P."/>
            <person name="Brottier P."/>
            <person name="Burtis K.C."/>
            <person name="Busam D.A."/>
            <person name="Butler H."/>
            <person name="Cadieu E."/>
            <person name="Center A."/>
            <person name="Chandra I."/>
            <person name="Cherry J.M."/>
            <person name="Cawley S."/>
            <person name="Dahlke C."/>
            <person name="Davenport L.B."/>
            <person name="Davies P."/>
            <person name="de Pablos B."/>
            <person name="Delcher A."/>
            <person name="Deng Z."/>
            <person name="Mays A.D."/>
            <person name="Dew I."/>
            <person name="Dietz S.M."/>
            <person name="Dodson K."/>
            <person name="Doup L.E."/>
            <person name="Downes M."/>
            <person name="Dugan-Rocha S."/>
            <person name="Dunkov B.C."/>
            <person name="Dunn P."/>
            <person name="Durbin K.J."/>
            <person name="Evangelista C.C."/>
            <person name="Ferraz C."/>
            <person name="Ferriera S."/>
            <person name="Fleischmann W."/>
            <person name="Fosler C."/>
            <person name="Gabrielian A.E."/>
            <person name="Garg N.S."/>
            <person name="Gelbart W.M."/>
            <person name="Glasser K."/>
            <person name="Glodek A."/>
            <person name="Gong F."/>
            <person name="Gorrell J.H."/>
            <person name="Gu Z."/>
            <person name="Guan P."/>
            <person name="Harris M."/>
            <person name="Harris N.L."/>
            <person name="Harvey D.A."/>
            <person name="Heiman T.J."/>
            <person name="Hernandez J.R."/>
            <person name="Houck J."/>
            <person name="Hostin D."/>
            <person name="Houston K.A."/>
            <person name="Howland T.J."/>
            <person name="Wei M.-H."/>
            <person name="Ibegwam C."/>
            <person name="Jalali M."/>
            <person name="Kalush F."/>
            <person name="Karpen G.H."/>
            <person name="Ke Z."/>
            <person name="Kennison J.A."/>
            <person name="Ketchum K.A."/>
            <person name="Kimmel B.E."/>
            <person name="Kodira C.D."/>
            <person name="Kraft C.L."/>
            <person name="Kravitz S."/>
            <person name="Kulp D."/>
            <person name="Lai Z."/>
            <person name="Lasko P."/>
            <person name="Lei Y."/>
            <person name="Levitsky A.A."/>
            <person name="Li J.H."/>
            <person name="Li Z."/>
            <person name="Liang Y."/>
            <person name="Lin X."/>
            <person name="Liu X."/>
            <person name="Mattei B."/>
            <person name="McIntosh T.C."/>
            <person name="McLeod M.P."/>
            <person name="McPherson D."/>
            <person name="Merkulov G."/>
            <person name="Milshina N.V."/>
            <person name="Mobarry C."/>
            <person name="Morris J."/>
            <person name="Moshrefi A."/>
            <person name="Mount S.M."/>
            <person name="Moy M."/>
            <person name="Murphy B."/>
            <person name="Murphy L."/>
            <person name="Muzny D.M."/>
            <person name="Nelson D.L."/>
            <person name="Nelson D.R."/>
            <person name="Nelson K.A."/>
            <person name="Nixon K."/>
            <person name="Nusskern D.R."/>
            <person name="Pacleb J.M."/>
            <person name="Palazzolo M."/>
            <person name="Pittman G.S."/>
            <person name="Pan S."/>
            <person name="Pollard J."/>
            <person name="Puri V."/>
            <person name="Reese M.G."/>
            <person name="Reinert K."/>
            <person name="Remington K."/>
            <person name="Saunders R.D.C."/>
            <person name="Scheeler F."/>
            <person name="Shen H."/>
            <person name="Shue B.C."/>
            <person name="Siden-Kiamos I."/>
            <person name="Simpson M."/>
            <person name="Skupski M.P."/>
            <person name="Smith T.J."/>
            <person name="Spier E."/>
            <person name="Spradling A.C."/>
            <person name="Stapleton M."/>
            <person name="Strong R."/>
            <person name="Sun E."/>
            <person name="Svirskas R."/>
            <person name="Tector C."/>
            <person name="Turner R."/>
            <person name="Venter E."/>
            <person name="Wang A.H."/>
            <person name="Wang X."/>
            <person name="Wang Z.-Y."/>
            <person name="Wassarman D.A."/>
            <person name="Weinstock G.M."/>
            <person name="Weissenbach J."/>
            <person name="Williams S.M."/>
            <person name="Woodage T."/>
            <person name="Worley K.C."/>
            <person name="Wu D."/>
            <person name="Yang S."/>
            <person name="Yao Q.A."/>
            <person name="Ye J."/>
            <person name="Yeh R.-F."/>
            <person name="Zaveri J.S."/>
            <person name="Zhan M."/>
            <person name="Zhang G."/>
            <person name="Zhao Q."/>
            <person name="Zheng L."/>
            <person name="Zheng X.H."/>
            <person name="Zhong F.N."/>
            <person name="Zhong W."/>
            <person name="Zhou X."/>
            <person name="Zhu S.C."/>
            <person name="Zhu X."/>
            <person name="Smith H.O."/>
            <person name="Gibbs R.A."/>
            <person name="Myers E.W."/>
            <person name="Rubin G.M."/>
            <person name="Venter J.C."/>
        </authorList>
    </citation>
    <scope>NUCLEOTIDE SEQUENCE [LARGE SCALE GENOMIC DNA]</scope>
    <source>
        <strain>Berkeley</strain>
    </source>
</reference>
<reference key="2">
    <citation type="journal article" date="2002" name="Genome Biol.">
        <title>Annotation of the Drosophila melanogaster euchromatic genome: a systematic review.</title>
        <authorList>
            <person name="Misra S."/>
            <person name="Crosby M.A."/>
            <person name="Mungall C.J."/>
            <person name="Matthews B.B."/>
            <person name="Campbell K.S."/>
            <person name="Hradecky P."/>
            <person name="Huang Y."/>
            <person name="Kaminker J.S."/>
            <person name="Millburn G.H."/>
            <person name="Prochnik S.E."/>
            <person name="Smith C.D."/>
            <person name="Tupy J.L."/>
            <person name="Whitfield E.J."/>
            <person name="Bayraktaroglu L."/>
            <person name="Berman B.P."/>
            <person name="Bettencourt B.R."/>
            <person name="Celniker S.E."/>
            <person name="de Grey A.D.N.J."/>
            <person name="Drysdale R.A."/>
            <person name="Harris N.L."/>
            <person name="Richter J."/>
            <person name="Russo S."/>
            <person name="Schroeder A.J."/>
            <person name="Shu S.Q."/>
            <person name="Stapleton M."/>
            <person name="Yamada C."/>
            <person name="Ashburner M."/>
            <person name="Gelbart W.M."/>
            <person name="Rubin G.M."/>
            <person name="Lewis S.E."/>
        </authorList>
    </citation>
    <scope>GENOME REANNOTATION</scope>
    <source>
        <strain>Berkeley</strain>
    </source>
</reference>
<reference key="3">
    <citation type="journal article" date="2002" name="Genome Biol.">
        <title>A Drosophila full-length cDNA resource.</title>
        <authorList>
            <person name="Stapleton M."/>
            <person name="Carlson J.W."/>
            <person name="Brokstein P."/>
            <person name="Yu C."/>
            <person name="Champe M."/>
            <person name="George R.A."/>
            <person name="Guarin H."/>
            <person name="Kronmiller B."/>
            <person name="Pacleb J.M."/>
            <person name="Park S."/>
            <person name="Wan K.H."/>
            <person name="Rubin G.M."/>
            <person name="Celniker S.E."/>
        </authorList>
    </citation>
    <scope>NUCLEOTIDE SEQUENCE [LARGE SCALE MRNA]</scope>
    <source>
        <strain>Berkeley</strain>
        <tissue>Embryo</tissue>
    </source>
</reference>
<reference key="4">
    <citation type="journal article" date="1999" name="Curr. Biol.">
        <title>The COP9 signalosome is essential for development of Drosophila melanogaster.</title>
        <authorList>
            <person name="Freilich S."/>
            <person name="Oron E."/>
            <person name="Kapp Y."/>
            <person name="Nevo-Caspi Y."/>
            <person name="Orgad S."/>
            <person name="Segal D."/>
            <person name="Chamovitz D.A."/>
        </authorList>
    </citation>
    <scope>IDENTIFICATION</scope>
    <scope>SUBCELLULAR LOCATION</scope>
    <scope>PROBABLE COMPOSITION OF THE CSN COMPLEX</scope>
</reference>
<reference key="5">
    <citation type="journal article" date="2003" name="Dev. Cell">
        <title>The COP9 signalosome promotes degradation of Cyclin E during early Drosophila oogenesis.</title>
        <authorList>
            <person name="Doronkin S."/>
            <person name="Djagaeva I."/>
            <person name="Beckendorf S.K."/>
        </authorList>
    </citation>
    <scope>FUNCTION OF CSN COMPLEX</scope>
</reference>
<comment type="function">
    <text evidence="3">Component of the COP9 signalosome complex (CSN), a complex involved in various cellular and developmental processes. The CSN complex is an essential regulator of the ubiquitin (Ubl) conjugation pathway by mediating the deneddylation of the cullin subunits of the SCF-type E3 ligase complexes, leading to decrease the Ubl ligase activity of SCF. The CSN complex plays an essential role in oogenesis and embryogenesis and is required for proper photoreceptor R cell differentiation and promote lamina glial cell migration or axon targeting. It also promotes Ubl-dependent degradation of cyclin E (CycE) during early oogenesis.</text>
</comment>
<comment type="subunit">
    <text>Component of the CSN complex, probably composed of CSN1b, alien/CSN2, CSN3, CSN4, CSN5, CSN6, CSN7 and CSN8.</text>
</comment>
<comment type="interaction">
    <interactant intactId="EBI-183494">
        <id>Q9VCY3</id>
    </interactant>
    <interactant intactId="EBI-141466">
        <id>Q9V345</id>
        <label>CSN4</label>
    </interactant>
    <organismsDiffer>false</organismsDiffer>
    <experiments>4</experiments>
</comment>
<comment type="interaction">
    <interactant intactId="EBI-183494">
        <id>Q9VCY3</id>
    </interactant>
    <interactant intactId="EBI-97187">
        <id>Q9XZ58</id>
        <label>CSN5</label>
    </interactant>
    <organismsDiffer>false</organismsDiffer>
    <experiments>3</experiments>
</comment>
<comment type="interaction">
    <interactant intactId="EBI-183494">
        <id>Q9VCY3</id>
    </interactant>
    <interactant intactId="EBI-183494">
        <id>Q9VCY3</id>
        <label>CSN6</label>
    </interactant>
    <organismsDiffer>false</organismsDiffer>
    <experiments>2</experiments>
</comment>
<comment type="interaction">
    <interactant intactId="EBI-183494">
        <id>Q9VCY3</id>
    </interactant>
    <interactant intactId="EBI-155199">
        <id>Q9V4S8</id>
        <label>CSN7</label>
    </interactant>
    <organismsDiffer>false</organismsDiffer>
    <experiments>2</experiments>
</comment>
<comment type="subcellular location">
    <subcellularLocation>
        <location evidence="5">Cytoplasm</location>
    </subcellularLocation>
    <subcellularLocation>
        <location evidence="5">Nucleus</location>
    </subcellularLocation>
</comment>
<comment type="miscellaneous">
    <text>Although strongly related to metalloprotease proteins, it lacks the JAMM motif that probably constitutes the catalytic center. Its function as protease is therefore unsure.</text>
</comment>
<comment type="similarity">
    <text evidence="4">Belongs to the peptidase M67A family. CSN6 subfamily.</text>
</comment>
<sequence>MEQMEVDVDMSAKPSTSSSAAAGSSMAVDKTADQNPQPQGNIMAAAGTSGSVTISLHPLVIMNISEHWTRFRAQHGEPRQVYGALIGKQKGRNIEIMNSFELKTDVIGDETVINKDYYNKKEQQYKQVFSDLDFIGWYTTGDNPTADDIKIQRQIAAINECPIMLQLNPLSRSVDHLPLKLFESLIDLVDGEATMLFVPLTYTLATEEAERIGVDHVARMTSNESGEKSVVAEHLVAQDSAIKMLNTRIKIVLQYIRDVEAGKLRANQEILREAYALCHRLPVMQVPAFQEEFYTQCNDVGLISYLGTLTKGCNDMHHFVNKFNMLYDRQGSARRMRGLYY</sequence>